<accession>A6V365</accession>
<dbReference type="EC" id="2.7.7.77" evidence="1"/>
<dbReference type="EMBL" id="CP000744">
    <property type="protein sequence ID" value="ABR82357.1"/>
    <property type="molecule type" value="Genomic_DNA"/>
</dbReference>
<dbReference type="RefSeq" id="WP_003157111.1">
    <property type="nucleotide sequence ID" value="NC_009656.1"/>
</dbReference>
<dbReference type="SMR" id="A6V365"/>
<dbReference type="KEGG" id="pap:PSPA7_2128"/>
<dbReference type="HOGENOM" id="CLU_055597_5_1_6"/>
<dbReference type="Proteomes" id="UP000001582">
    <property type="component" value="Chromosome"/>
</dbReference>
<dbReference type="GO" id="GO:0005737">
    <property type="term" value="C:cytoplasm"/>
    <property type="evidence" value="ECO:0007669"/>
    <property type="project" value="UniProtKB-SubCell"/>
</dbReference>
<dbReference type="GO" id="GO:0005525">
    <property type="term" value="F:GTP binding"/>
    <property type="evidence" value="ECO:0007669"/>
    <property type="project" value="UniProtKB-UniRule"/>
</dbReference>
<dbReference type="GO" id="GO:0046872">
    <property type="term" value="F:metal ion binding"/>
    <property type="evidence" value="ECO:0007669"/>
    <property type="project" value="UniProtKB-KW"/>
</dbReference>
<dbReference type="GO" id="GO:0061603">
    <property type="term" value="F:molybdenum cofactor guanylyltransferase activity"/>
    <property type="evidence" value="ECO:0007669"/>
    <property type="project" value="UniProtKB-EC"/>
</dbReference>
<dbReference type="GO" id="GO:1902758">
    <property type="term" value="P:bis(molybdopterin guanine dinucleotide)molybdenum biosynthetic process"/>
    <property type="evidence" value="ECO:0007669"/>
    <property type="project" value="TreeGrafter"/>
</dbReference>
<dbReference type="CDD" id="cd02503">
    <property type="entry name" value="MobA"/>
    <property type="match status" value="1"/>
</dbReference>
<dbReference type="Gene3D" id="3.90.550.10">
    <property type="entry name" value="Spore Coat Polysaccharide Biosynthesis Protein SpsA, Chain A"/>
    <property type="match status" value="1"/>
</dbReference>
<dbReference type="HAMAP" id="MF_00316">
    <property type="entry name" value="MobA"/>
    <property type="match status" value="1"/>
</dbReference>
<dbReference type="InterPro" id="IPR025877">
    <property type="entry name" value="MobA-like_NTP_Trfase"/>
</dbReference>
<dbReference type="InterPro" id="IPR013482">
    <property type="entry name" value="Molybde_CF_guanTrfase"/>
</dbReference>
<dbReference type="InterPro" id="IPR029044">
    <property type="entry name" value="Nucleotide-diphossugar_trans"/>
</dbReference>
<dbReference type="NCBIfam" id="TIGR02665">
    <property type="entry name" value="molyb_mobA"/>
    <property type="match status" value="1"/>
</dbReference>
<dbReference type="PANTHER" id="PTHR19136">
    <property type="entry name" value="MOLYBDENUM COFACTOR GUANYLYLTRANSFERASE"/>
    <property type="match status" value="1"/>
</dbReference>
<dbReference type="PANTHER" id="PTHR19136:SF81">
    <property type="entry name" value="MOLYBDENUM COFACTOR GUANYLYLTRANSFERASE"/>
    <property type="match status" value="1"/>
</dbReference>
<dbReference type="Pfam" id="PF12804">
    <property type="entry name" value="NTP_transf_3"/>
    <property type="match status" value="1"/>
</dbReference>
<dbReference type="SUPFAM" id="SSF53448">
    <property type="entry name" value="Nucleotide-diphospho-sugar transferases"/>
    <property type="match status" value="1"/>
</dbReference>
<sequence>MPDSALPPCSILILAGGRGQRMGGRDKGLIEWQGLPLIAHLQRLVRPLTDDLIVSCNRNQERYAAYADRLVSDDSLDFPGPLAGIRAGLAVARHPWLLVLPCDAPRIDHALLETLLQAAGRAPARPWMLRCGGQWEPLFSLIPTHLAEEIEHAWRQGDRSPRHVLLPLGAQAIELAAGDPRLANLNTPELLAKHHELK</sequence>
<feature type="chain" id="PRO_1000115806" description="Molybdenum cofactor guanylyltransferase">
    <location>
        <begin position="1"/>
        <end position="198"/>
    </location>
</feature>
<feature type="binding site" evidence="1">
    <location>
        <begin position="14"/>
        <end position="16"/>
    </location>
    <ligand>
        <name>GTP</name>
        <dbReference type="ChEBI" id="CHEBI:37565"/>
    </ligand>
</feature>
<feature type="binding site" evidence="1">
    <location>
        <position position="27"/>
    </location>
    <ligand>
        <name>GTP</name>
        <dbReference type="ChEBI" id="CHEBI:37565"/>
    </ligand>
</feature>
<feature type="binding site" evidence="1">
    <location>
        <position position="73"/>
    </location>
    <ligand>
        <name>GTP</name>
        <dbReference type="ChEBI" id="CHEBI:37565"/>
    </ligand>
</feature>
<feature type="binding site" evidence="1">
    <location>
        <position position="103"/>
    </location>
    <ligand>
        <name>GTP</name>
        <dbReference type="ChEBI" id="CHEBI:37565"/>
    </ligand>
</feature>
<feature type="binding site" evidence="1">
    <location>
        <position position="103"/>
    </location>
    <ligand>
        <name>Mg(2+)</name>
        <dbReference type="ChEBI" id="CHEBI:18420"/>
    </ligand>
</feature>
<organism>
    <name type="scientific">Pseudomonas paraeruginosa (strain DSM 24068 / PA7)</name>
    <name type="common">Pseudomonas aeruginosa (strain PA7)</name>
    <dbReference type="NCBI Taxonomy" id="381754"/>
    <lineage>
        <taxon>Bacteria</taxon>
        <taxon>Pseudomonadati</taxon>
        <taxon>Pseudomonadota</taxon>
        <taxon>Gammaproteobacteria</taxon>
        <taxon>Pseudomonadales</taxon>
        <taxon>Pseudomonadaceae</taxon>
        <taxon>Pseudomonas</taxon>
        <taxon>Pseudomonas paraeruginosa</taxon>
    </lineage>
</organism>
<proteinExistence type="inferred from homology"/>
<comment type="function">
    <text evidence="1">Transfers a GMP moiety from GTP to Mo-molybdopterin (Mo-MPT) cofactor (Moco or molybdenum cofactor) to form Mo-molybdopterin guanine dinucleotide (Mo-MGD) cofactor.</text>
</comment>
<comment type="catalytic activity">
    <reaction evidence="1">
        <text>Mo-molybdopterin + GTP + H(+) = Mo-molybdopterin guanine dinucleotide + diphosphate</text>
        <dbReference type="Rhea" id="RHEA:34243"/>
        <dbReference type="ChEBI" id="CHEBI:15378"/>
        <dbReference type="ChEBI" id="CHEBI:33019"/>
        <dbReference type="ChEBI" id="CHEBI:37565"/>
        <dbReference type="ChEBI" id="CHEBI:71302"/>
        <dbReference type="ChEBI" id="CHEBI:71310"/>
        <dbReference type="EC" id="2.7.7.77"/>
    </reaction>
</comment>
<comment type="cofactor">
    <cofactor evidence="1">
        <name>Mg(2+)</name>
        <dbReference type="ChEBI" id="CHEBI:18420"/>
    </cofactor>
</comment>
<comment type="subunit">
    <text evidence="1">Monomer.</text>
</comment>
<comment type="subcellular location">
    <subcellularLocation>
        <location evidence="1">Cytoplasm</location>
    </subcellularLocation>
</comment>
<comment type="domain">
    <text evidence="1">The N-terminal domain determines nucleotide recognition and specific binding, while the C-terminal domain determines the specific binding to the target protein.</text>
</comment>
<comment type="similarity">
    <text evidence="1">Belongs to the MobA family.</text>
</comment>
<evidence type="ECO:0000255" key="1">
    <source>
        <dbReference type="HAMAP-Rule" id="MF_00316"/>
    </source>
</evidence>
<reference key="1">
    <citation type="submission" date="2007-06" db="EMBL/GenBank/DDBJ databases">
        <authorList>
            <person name="Dodson R.J."/>
            <person name="Harkins D."/>
            <person name="Paulsen I.T."/>
        </authorList>
    </citation>
    <scope>NUCLEOTIDE SEQUENCE [LARGE SCALE GENOMIC DNA]</scope>
    <source>
        <strain>DSM 24068 / PA7</strain>
    </source>
</reference>
<gene>
    <name evidence="1" type="primary">mobA</name>
    <name type="ordered locus">PSPA7_2128</name>
</gene>
<keyword id="KW-0963">Cytoplasm</keyword>
<keyword id="KW-0342">GTP-binding</keyword>
<keyword id="KW-0460">Magnesium</keyword>
<keyword id="KW-0479">Metal-binding</keyword>
<keyword id="KW-0501">Molybdenum cofactor biosynthesis</keyword>
<keyword id="KW-0547">Nucleotide-binding</keyword>
<keyword id="KW-0808">Transferase</keyword>
<name>MOBA_PSEP7</name>
<protein>
    <recommendedName>
        <fullName evidence="1">Molybdenum cofactor guanylyltransferase</fullName>
        <shortName evidence="1">MoCo guanylyltransferase</shortName>
        <ecNumber evidence="1">2.7.7.77</ecNumber>
    </recommendedName>
    <alternativeName>
        <fullName evidence="1">GTP:molybdopterin guanylyltransferase</fullName>
    </alternativeName>
    <alternativeName>
        <fullName evidence="1">Mo-MPT guanylyltransferase</fullName>
    </alternativeName>
    <alternativeName>
        <fullName evidence="1">Molybdopterin guanylyltransferase</fullName>
    </alternativeName>
    <alternativeName>
        <fullName evidence="1">Molybdopterin-guanine dinucleotide synthase</fullName>
        <shortName evidence="1">MGD synthase</shortName>
    </alternativeName>
</protein>